<accession>Q2VEQ7</accession>
<accession>I3R656</accession>
<sequence length="308" mass="33336">MHIERLAVDESVGRAMPPQRFIEALSDLGVPVEFAGEDEQFGPGDAVASFGHRDAFLDADWVHCIRAGYDEFPVGVYEEAGTYLTNSTGIHGTTVGETVAGYMLTFARRLHAYRDAQHDHAWDLPRYEEPFTLAGERVCVVGLGTLGRGVVDRAAALGMEVVGVRRSGDPVDNVSTVYTPDRLHEAIADARFVVLATPLTDETEGMVAAPEFETMREDASLVNVARGPVVVESDLVAALDSGDIAGAALDVFSEEPLPEDSPLWDFEDVLITPHVSAATSKYHEDVAALIRENIEKIATGDELTNRVV</sequence>
<dbReference type="EC" id="1.1.1.-"/>
<dbReference type="EMBL" id="DQ223970">
    <property type="protein sequence ID" value="ABB30004.1"/>
    <property type="molecule type" value="Genomic_DNA"/>
</dbReference>
<dbReference type="EMBL" id="CP001868">
    <property type="protein sequence ID" value="AFK19716.1"/>
    <property type="molecule type" value="Genomic_DNA"/>
</dbReference>
<dbReference type="RefSeq" id="WP_004059362.1">
    <property type="nucleotide sequence ID" value="NC_017941.2"/>
</dbReference>
<dbReference type="PDB" id="5MH5">
    <property type="method" value="X-ray"/>
    <property type="resolution" value="1.40 A"/>
    <property type="chains" value="A/B=1-308"/>
</dbReference>
<dbReference type="PDB" id="5MH6">
    <property type="method" value="X-ray"/>
    <property type="resolution" value="1.35 A"/>
    <property type="chains" value="A/B/C/D=1-308"/>
</dbReference>
<dbReference type="PDB" id="5MHA">
    <property type="method" value="X-ray"/>
    <property type="resolution" value="1.57 A"/>
    <property type="chains" value="A/B=1-308"/>
</dbReference>
<dbReference type="PDBsum" id="5MH5"/>
<dbReference type="PDBsum" id="5MH6"/>
<dbReference type="PDBsum" id="5MHA"/>
<dbReference type="SMR" id="Q2VEQ7"/>
<dbReference type="STRING" id="523841.HFX_2024"/>
<dbReference type="PaxDb" id="523841-HFX_2024"/>
<dbReference type="GeneID" id="40155066"/>
<dbReference type="KEGG" id="hme:HFX_2024"/>
<dbReference type="eggNOG" id="arCOG01757">
    <property type="taxonomic scope" value="Archaea"/>
</dbReference>
<dbReference type="HOGENOM" id="CLU_019796_1_0_2"/>
<dbReference type="OrthoDB" id="162251at2157"/>
<dbReference type="BioCyc" id="MetaCyc:MONOMER-17694"/>
<dbReference type="BRENDA" id="1.1.1.272">
    <property type="organism ID" value="2566"/>
</dbReference>
<dbReference type="SABIO-RK" id="Q2VEQ7"/>
<dbReference type="Proteomes" id="UP000006469">
    <property type="component" value="Chromosome"/>
</dbReference>
<dbReference type="GO" id="GO:0031406">
    <property type="term" value="F:carboxylic acid binding"/>
    <property type="evidence" value="ECO:0000314"/>
    <property type="project" value="UniProtKB"/>
</dbReference>
<dbReference type="GO" id="GO:0070404">
    <property type="term" value="F:NADH binding"/>
    <property type="evidence" value="ECO:0000314"/>
    <property type="project" value="UniProtKB"/>
</dbReference>
<dbReference type="GO" id="GO:0070402">
    <property type="term" value="F:NADPH binding"/>
    <property type="evidence" value="ECO:0000314"/>
    <property type="project" value="UniProtKB"/>
</dbReference>
<dbReference type="GO" id="GO:0016616">
    <property type="term" value="F:oxidoreductase activity, acting on the CH-OH group of donors, NAD or NADP as acceptor"/>
    <property type="evidence" value="ECO:0000314"/>
    <property type="project" value="UniProtKB"/>
</dbReference>
<dbReference type="GO" id="GO:0019752">
    <property type="term" value="P:carboxylic acid metabolic process"/>
    <property type="evidence" value="ECO:0000314"/>
    <property type="project" value="UniProtKB"/>
</dbReference>
<dbReference type="CDD" id="cd05300">
    <property type="entry name" value="2-Hacid_dh_1"/>
    <property type="match status" value="1"/>
</dbReference>
<dbReference type="FunFam" id="3.40.50.720:FF:000363">
    <property type="entry name" value="D-isomer specific 2-hydroxyacid dehydrogenase"/>
    <property type="match status" value="1"/>
</dbReference>
<dbReference type="Gene3D" id="3.40.50.720">
    <property type="entry name" value="NAD(P)-binding Rossmann-like Domain"/>
    <property type="match status" value="2"/>
</dbReference>
<dbReference type="InterPro" id="IPR006140">
    <property type="entry name" value="D-isomer_DH_NAD-bd"/>
</dbReference>
<dbReference type="InterPro" id="IPR054891">
    <property type="entry name" value="Dhydh_Halo"/>
</dbReference>
<dbReference type="InterPro" id="IPR036291">
    <property type="entry name" value="NAD(P)-bd_dom_sf"/>
</dbReference>
<dbReference type="NCBIfam" id="NF041369">
    <property type="entry name" value="Dhydh_Halo"/>
    <property type="match status" value="1"/>
</dbReference>
<dbReference type="PANTHER" id="PTHR43333">
    <property type="entry name" value="2-HACID_DH_C DOMAIN-CONTAINING PROTEIN"/>
    <property type="match status" value="1"/>
</dbReference>
<dbReference type="PANTHER" id="PTHR43333:SF1">
    <property type="entry name" value="D-ISOMER SPECIFIC 2-HYDROXYACID DEHYDROGENASE NAD-BINDING DOMAIN-CONTAINING PROTEIN"/>
    <property type="match status" value="1"/>
</dbReference>
<dbReference type="Pfam" id="PF02826">
    <property type="entry name" value="2-Hacid_dh_C"/>
    <property type="match status" value="1"/>
</dbReference>
<dbReference type="SUPFAM" id="SSF51735">
    <property type="entry name" value="NAD(P)-binding Rossmann-fold domains"/>
    <property type="match status" value="1"/>
</dbReference>
<comment type="function">
    <text evidence="3">Catalyzes the stereospecific NAD(P)H-dependent reduction of 2-ketocarboxylic acids into the corresponding D-2-hydroxycarboxylic acids. Can use both NADPH or NADH as reductant, displaying a marked preference for NADPH over NADH. Shows a broad substrate specificity, although it displays a marked preference for the 2-ketocarboxylic acids having an unbranched chain of 4-5 carbon atoms.</text>
</comment>
<comment type="biophysicochemical properties">
    <kinetics>
        <KM evidence="3">1.31 mM for 2-ketoisoleucine (in the presence of NADPH, at pH 8.5 and 40 degrees Celsius)</KM>
        <KM evidence="3">11.9 mM for 2-ketoisoleucine (in the presence of NADH, at pH 8.5 and 40 degrees Celsius)</KM>
        <KM evidence="3">3.77 mM for 2-ketoisocaproate (in the presence of NADPH, at pH 8.5 and 40 degrees Celsius)</KM>
        <KM evidence="3">13.9 mM for 2-ketoisocaproate (in the presence of NADH, at pH 8.5 and 40 degrees Celsius)</KM>
        <KM evidence="3">13.45 mM for 2-ketobutyrate (in the presence of NADPH, at pH 8.5 and 40 degrees Celsius)</KM>
        <KM evidence="3">106 mM for 2-ketobutyrate (in the presence of NADH, at pH 8.5 and 40 degrees Celsius)</KM>
        <KM evidence="3">21.96 mM for pyruvate (in the presence of NADPH, at pH 5 and 40 degrees Celsius)</KM>
        <KM evidence="3">0.046 mM for NADPH (at pH 8.5 and 40 degrees Celsius)</KM>
        <KM evidence="3">0.33 mM for NADH (at pH 8.5 and 40 degrees Celsius)</KM>
        <Vmax evidence="3">1.733 umol/min/mg enzyme for the reduction of 2-ketoisoleucine by NADPH (at pH 8.5 and 40 degrees Celsius)</Vmax>
        <Vmax evidence="3">1.02 umol/min/mg enzyme for the reduction of 2-ketoisoleucine by NADH (at pH 8.5 and 40 degrees Celsius)</Vmax>
        <Vmax evidence="3">1.47 umol/min/mg enzyme for the reduction of 2-ketoisocaproate by NADPH (at pH 8.5 and 40 degrees Celsius)</Vmax>
        <Vmax evidence="3">0.94 umol/min/mg enzyme for the reduction of 2-ketoisocaproate by NADH (at pH 8.5 and 40 degrees Celsius)</Vmax>
        <Vmax evidence="3">2.09 umol/min/mg enzyme for the reduction of 2-ketobutyrate by NADPH (at pH 8.5 and 40 degrees Celsius)</Vmax>
        <Vmax evidence="3">2.1 umol/min/mg enzyme for the reduction of 2-ketobutyrate by NADH (at pH 8.5 and 40 degrees Celsius)</Vmax>
        <Vmax evidence="3">0.8 umol/min/mg enzyme for the reduction of pyruvate by NADPH (at pH 5 and 40 degrees Celsius)</Vmax>
    </kinetics>
</comment>
<comment type="subunit">
    <text evidence="3">Homotetramer.</text>
</comment>
<comment type="similarity">
    <text evidence="4">Belongs to the D-isomer specific 2-hydroxyacid dehydrogenase family.</text>
</comment>
<evidence type="ECO:0000250" key="1"/>
<evidence type="ECO:0000250" key="2">
    <source>
        <dbReference type="UniProtKB" id="P0A9T0"/>
    </source>
</evidence>
<evidence type="ECO:0000269" key="3">
    <source>
    </source>
</evidence>
<evidence type="ECO:0000305" key="4"/>
<evidence type="ECO:0007829" key="5">
    <source>
        <dbReference type="PDB" id="5MH6"/>
    </source>
</evidence>
<evidence type="ECO:0007829" key="6">
    <source>
        <dbReference type="PDB" id="5MHA"/>
    </source>
</evidence>
<gene>
    <name type="primary">ddh</name>
    <name type="synonym">serA5</name>
    <name type="ordered locus">HFX_2024</name>
</gene>
<keyword id="KW-0002">3D-structure</keyword>
<keyword id="KW-0520">NAD</keyword>
<keyword id="KW-0521">NADP</keyword>
<keyword id="KW-0560">Oxidoreductase</keyword>
<protein>
    <recommendedName>
        <fullName>D-2-hydroxyacid dehydrogenase</fullName>
        <shortName>D2-HDH</shortName>
        <ecNumber>1.1.1.-</ecNumber>
    </recommendedName>
    <alternativeName>
        <fullName>D-specific 2-hydroxyacid dehydrogenase</fullName>
    </alternativeName>
</protein>
<reference key="1">
    <citation type="journal article" date="2006" name="Biochim. Biophys. Acta">
        <title>A new D-2-hydroxyacid dehydrogenase with dual coenzyme-specificity from Haloferax mediterranei, sequence analysis and heterologous overexpression.</title>
        <authorList>
            <person name="Domenech J."/>
            <person name="Ferrer J."/>
        </authorList>
    </citation>
    <scope>NUCLEOTIDE SEQUENCE [GENOMIC DNA]</scope>
    <scope>FUNCTION</scope>
    <scope>CATALYTIC ACTIVITY</scope>
    <scope>KINETIC PARAMETERS</scope>
    <scope>SUBSTRATE SPECIFICITY</scope>
    <scope>SUBUNIT</scope>
    <source>
        <strain>ATCC 33500 / DSM 1411 / JCM 8866 / NBRC 14739 / NCIMB 2177 / R-4</strain>
    </source>
</reference>
<reference key="2">
    <citation type="journal article" date="2012" name="J. Bacteriol.">
        <title>Complete genome sequence of the metabolically versatile halophilic archaeon Haloferax mediterranei, a poly(3-hydroxybutyrate-co-3-hydroxyvalerate) producer.</title>
        <authorList>
            <person name="Han J."/>
            <person name="Zhang F."/>
            <person name="Hou J."/>
            <person name="Liu X."/>
            <person name="Li M."/>
            <person name="Liu H."/>
            <person name="Cai L."/>
            <person name="Zhang B."/>
            <person name="Chen Y."/>
            <person name="Zhou J."/>
            <person name="Hu S."/>
            <person name="Xiang H."/>
        </authorList>
    </citation>
    <scope>NUCLEOTIDE SEQUENCE [LARGE SCALE GENOMIC DNA]</scope>
    <source>
        <strain>ATCC 33500 / DSM 1411 / JCM 8866 / NBRC 14739 / NCIMB 2177 / R-4</strain>
    </source>
</reference>
<proteinExistence type="evidence at protein level"/>
<organism>
    <name type="scientific">Haloferax mediterranei (strain ATCC 33500 / DSM 1411 / JCM 8866 / NBRC 14739 / NCIMB 2177 / R-4)</name>
    <name type="common">Halobacterium mediterranei</name>
    <dbReference type="NCBI Taxonomy" id="523841"/>
    <lineage>
        <taxon>Archaea</taxon>
        <taxon>Methanobacteriati</taxon>
        <taxon>Methanobacteriota</taxon>
        <taxon>Stenosarchaea group</taxon>
        <taxon>Halobacteria</taxon>
        <taxon>Halobacteriales</taxon>
        <taxon>Haloferacaceae</taxon>
        <taxon>Haloferax</taxon>
    </lineage>
</organism>
<name>DDH_HALMT</name>
<feature type="chain" id="PRO_0000414497" description="D-2-hydroxyacid dehydrogenase">
    <location>
        <begin position="1"/>
        <end position="308"/>
    </location>
</feature>
<feature type="active site" evidence="1">
    <location>
        <position position="226"/>
    </location>
</feature>
<feature type="active site" evidence="1">
    <location>
        <position position="255"/>
    </location>
</feature>
<feature type="active site" description="Proton donor" evidence="1">
    <location>
        <position position="274"/>
    </location>
</feature>
<feature type="binding site" evidence="2">
    <location>
        <begin position="145"/>
        <end position="146"/>
    </location>
    <ligand>
        <name>NAD(+)</name>
        <dbReference type="ChEBI" id="CHEBI:57540"/>
    </ligand>
</feature>
<feature type="binding site" evidence="2">
    <location>
        <begin position="224"/>
        <end position="226"/>
    </location>
    <ligand>
        <name>NAD(+)</name>
        <dbReference type="ChEBI" id="CHEBI:57540"/>
    </ligand>
</feature>
<feature type="binding site" evidence="2">
    <location>
        <position position="250"/>
    </location>
    <ligand>
        <name>NAD(+)</name>
        <dbReference type="ChEBI" id="CHEBI:57540"/>
    </ligand>
</feature>
<feature type="binding site" evidence="2">
    <location>
        <begin position="274"/>
        <end position="277"/>
    </location>
    <ligand>
        <name>NAD(+)</name>
        <dbReference type="ChEBI" id="CHEBI:57540"/>
    </ligand>
</feature>
<feature type="strand" evidence="5">
    <location>
        <begin position="5"/>
        <end position="9"/>
    </location>
</feature>
<feature type="helix" evidence="5">
    <location>
        <begin position="10"/>
        <end position="14"/>
    </location>
</feature>
<feature type="helix" evidence="5">
    <location>
        <begin position="18"/>
        <end position="24"/>
    </location>
</feature>
<feature type="turn" evidence="5">
    <location>
        <begin position="25"/>
        <end position="27"/>
    </location>
</feature>
<feature type="strand" evidence="5">
    <location>
        <begin position="28"/>
        <end position="30"/>
    </location>
</feature>
<feature type="strand" evidence="5">
    <location>
        <begin position="32"/>
        <end position="35"/>
    </location>
</feature>
<feature type="strand" evidence="5">
    <location>
        <begin position="45"/>
        <end position="51"/>
    </location>
</feature>
<feature type="helix" evidence="5">
    <location>
        <begin position="54"/>
        <end position="58"/>
    </location>
</feature>
<feature type="strand" evidence="5">
    <location>
        <begin position="59"/>
        <end position="67"/>
    </location>
</feature>
<feature type="helix" evidence="5">
    <location>
        <begin position="74"/>
        <end position="80"/>
    </location>
</feature>
<feature type="strand" evidence="5">
    <location>
        <begin position="83"/>
        <end position="85"/>
    </location>
</feature>
<feature type="helix" evidence="5">
    <location>
        <begin position="92"/>
        <end position="108"/>
    </location>
</feature>
<feature type="helix" evidence="5">
    <location>
        <begin position="110"/>
        <end position="118"/>
    </location>
</feature>
<feature type="strand" evidence="5">
    <location>
        <begin position="137"/>
        <end position="141"/>
    </location>
</feature>
<feature type="helix" evidence="5">
    <location>
        <begin position="145"/>
        <end position="156"/>
    </location>
</feature>
<feature type="strand" evidence="5">
    <location>
        <begin position="160"/>
        <end position="164"/>
    </location>
</feature>
<feature type="strand" evidence="5">
    <location>
        <begin position="175"/>
        <end position="178"/>
    </location>
</feature>
<feature type="helix" evidence="5">
    <location>
        <begin position="180"/>
        <end position="182"/>
    </location>
</feature>
<feature type="helix" evidence="5">
    <location>
        <begin position="183"/>
        <end position="187"/>
    </location>
</feature>
<feature type="strand" evidence="5">
    <location>
        <begin position="191"/>
        <end position="195"/>
    </location>
</feature>
<feature type="turn" evidence="5">
    <location>
        <begin position="201"/>
        <end position="205"/>
    </location>
</feature>
<feature type="helix" evidence="5">
    <location>
        <begin position="209"/>
        <end position="214"/>
    </location>
</feature>
<feature type="strand" evidence="5">
    <location>
        <begin position="220"/>
        <end position="223"/>
    </location>
</feature>
<feature type="helix" evidence="5">
    <location>
        <begin position="227"/>
        <end position="229"/>
    </location>
</feature>
<feature type="helix" evidence="5">
    <location>
        <begin position="232"/>
        <end position="241"/>
    </location>
</feature>
<feature type="strand" evidence="5">
    <location>
        <begin position="246"/>
        <end position="250"/>
    </location>
</feature>
<feature type="strand" evidence="5">
    <location>
        <begin position="253"/>
        <end position="256"/>
    </location>
</feature>
<feature type="helix" evidence="5">
    <location>
        <begin position="262"/>
        <end position="265"/>
    </location>
</feature>
<feature type="strand" evidence="5">
    <location>
        <begin position="269"/>
        <end position="271"/>
    </location>
</feature>
<feature type="helix" evidence="5">
    <location>
        <begin position="282"/>
        <end position="299"/>
    </location>
</feature>
<feature type="strand" evidence="6">
    <location>
        <begin position="306"/>
        <end position="308"/>
    </location>
</feature>